<organism>
    <name type="scientific">Staphylococcus saprophyticus subsp. saprophyticus (strain ATCC 15305 / DSM 20229 / NCIMB 8711 / NCTC 7292 / S-41)</name>
    <dbReference type="NCBI Taxonomy" id="342451"/>
    <lineage>
        <taxon>Bacteria</taxon>
        <taxon>Bacillati</taxon>
        <taxon>Bacillota</taxon>
        <taxon>Bacilli</taxon>
        <taxon>Bacillales</taxon>
        <taxon>Staphylococcaceae</taxon>
        <taxon>Staphylococcus</taxon>
    </lineage>
</organism>
<keyword id="KW-1185">Reference proteome</keyword>
<keyword id="KW-0678">Repressor</keyword>
<keyword id="KW-0346">Stress response</keyword>
<keyword id="KW-0804">Transcription</keyword>
<keyword id="KW-0805">Transcription regulation</keyword>
<protein>
    <recommendedName>
        <fullName evidence="1">Heat-inducible transcription repressor HrcA</fullName>
    </recommendedName>
</protein>
<name>HRCA_STAS1</name>
<reference key="1">
    <citation type="journal article" date="2005" name="Proc. Natl. Acad. Sci. U.S.A.">
        <title>Whole genome sequence of Staphylococcus saprophyticus reveals the pathogenesis of uncomplicated urinary tract infection.</title>
        <authorList>
            <person name="Kuroda M."/>
            <person name="Yamashita A."/>
            <person name="Hirakawa H."/>
            <person name="Kumano M."/>
            <person name="Morikawa K."/>
            <person name="Higashide M."/>
            <person name="Maruyama A."/>
            <person name="Inose Y."/>
            <person name="Matoba K."/>
            <person name="Toh H."/>
            <person name="Kuhara S."/>
            <person name="Hattori M."/>
            <person name="Ohta T."/>
        </authorList>
    </citation>
    <scope>NUCLEOTIDE SEQUENCE [LARGE SCALE GENOMIC DNA]</scope>
    <source>
        <strain>ATCC 15305 / DSM 20229 / NCIMB 8711 / NCTC 7292 / S-41</strain>
    </source>
</reference>
<proteinExistence type="inferred from homology"/>
<comment type="function">
    <text evidence="1">Negative regulator of class I heat shock genes (grpE-dnaK-dnaJ and groELS operons). Prevents heat-shock induction of these operons.</text>
</comment>
<comment type="similarity">
    <text evidence="1">Belongs to the HrcA family.</text>
</comment>
<accession>Q49Y24</accession>
<sequence length="326" mass="37241">MISDRQLSILNAIVEDYVDLGQPIGSKTLIERHKLNVSPATIRNEMKQLEDLELIEKTHTSSGRYPSESGIRYYVNQLLQETSHQQQTKMQRLKDLVIENHYDLSSTLSDFANELSIASQYTTLVMRPNHKQDIINNIHLIRANAYLVIMVVVFTSGHVEHLHLASEVPLSNDELTKISNFVTAKYNEWNNHRFENELNAFVKSDTEKDFIKDMLNMIDIHFDNQSNGIFMGGKVKLIDALNESNVSSIQPILQYIESNKITQLLDEMSNTSINVKIGHEIESSLSDISIVTSEYHIDDRLKGQIAVIGPTAMNYQNVIRLLNTIW</sequence>
<gene>
    <name evidence="1" type="primary">hrcA</name>
    <name type="ordered locus">SSP1175</name>
</gene>
<evidence type="ECO:0000255" key="1">
    <source>
        <dbReference type="HAMAP-Rule" id="MF_00081"/>
    </source>
</evidence>
<dbReference type="EMBL" id="AP008934">
    <property type="protein sequence ID" value="BAE18320.1"/>
    <property type="molecule type" value="Genomic_DNA"/>
</dbReference>
<dbReference type="RefSeq" id="WP_011302992.1">
    <property type="nucleotide sequence ID" value="NZ_MTGA01000038.1"/>
</dbReference>
<dbReference type="SMR" id="Q49Y24"/>
<dbReference type="GeneID" id="3616922"/>
<dbReference type="KEGG" id="ssp:SSP1175"/>
<dbReference type="PATRIC" id="fig|342451.11.peg.1173"/>
<dbReference type="eggNOG" id="COG1420">
    <property type="taxonomic scope" value="Bacteria"/>
</dbReference>
<dbReference type="HOGENOM" id="CLU_050019_1_0_9"/>
<dbReference type="OrthoDB" id="9783139at2"/>
<dbReference type="Proteomes" id="UP000006371">
    <property type="component" value="Chromosome"/>
</dbReference>
<dbReference type="GO" id="GO:0003677">
    <property type="term" value="F:DNA binding"/>
    <property type="evidence" value="ECO:0007669"/>
    <property type="project" value="InterPro"/>
</dbReference>
<dbReference type="GO" id="GO:0045892">
    <property type="term" value="P:negative regulation of DNA-templated transcription"/>
    <property type="evidence" value="ECO:0007669"/>
    <property type="project" value="UniProtKB-UniRule"/>
</dbReference>
<dbReference type="Gene3D" id="3.30.450.40">
    <property type="match status" value="1"/>
</dbReference>
<dbReference type="Gene3D" id="3.30.390.60">
    <property type="entry name" value="Heat-inducible transcription repressor hrca homolog, domain 3"/>
    <property type="match status" value="1"/>
</dbReference>
<dbReference type="Gene3D" id="1.10.10.10">
    <property type="entry name" value="Winged helix-like DNA-binding domain superfamily/Winged helix DNA-binding domain"/>
    <property type="match status" value="1"/>
</dbReference>
<dbReference type="HAMAP" id="MF_00081">
    <property type="entry name" value="HrcA"/>
    <property type="match status" value="1"/>
</dbReference>
<dbReference type="InterPro" id="IPR029016">
    <property type="entry name" value="GAF-like_dom_sf"/>
</dbReference>
<dbReference type="InterPro" id="IPR002571">
    <property type="entry name" value="HrcA"/>
</dbReference>
<dbReference type="InterPro" id="IPR021153">
    <property type="entry name" value="HrcA_C"/>
</dbReference>
<dbReference type="InterPro" id="IPR036388">
    <property type="entry name" value="WH-like_DNA-bd_sf"/>
</dbReference>
<dbReference type="InterPro" id="IPR036390">
    <property type="entry name" value="WH_DNA-bd_sf"/>
</dbReference>
<dbReference type="InterPro" id="IPR005104">
    <property type="entry name" value="WHTH_HrcA_DNA-bd"/>
</dbReference>
<dbReference type="InterPro" id="IPR023120">
    <property type="entry name" value="WHTH_transcript_rep_HrcA_IDD"/>
</dbReference>
<dbReference type="NCBIfam" id="TIGR00331">
    <property type="entry name" value="hrcA"/>
    <property type="match status" value="1"/>
</dbReference>
<dbReference type="PANTHER" id="PTHR34824">
    <property type="entry name" value="HEAT-INDUCIBLE TRANSCRIPTION REPRESSOR HRCA"/>
    <property type="match status" value="1"/>
</dbReference>
<dbReference type="PANTHER" id="PTHR34824:SF1">
    <property type="entry name" value="HEAT-INDUCIBLE TRANSCRIPTION REPRESSOR HRCA"/>
    <property type="match status" value="1"/>
</dbReference>
<dbReference type="Pfam" id="PF01628">
    <property type="entry name" value="HrcA"/>
    <property type="match status" value="1"/>
</dbReference>
<dbReference type="Pfam" id="PF03444">
    <property type="entry name" value="HrcA_DNA-bdg"/>
    <property type="match status" value="1"/>
</dbReference>
<dbReference type="PIRSF" id="PIRSF005485">
    <property type="entry name" value="HrcA"/>
    <property type="match status" value="1"/>
</dbReference>
<dbReference type="SUPFAM" id="SSF55781">
    <property type="entry name" value="GAF domain-like"/>
    <property type="match status" value="1"/>
</dbReference>
<dbReference type="SUPFAM" id="SSF46785">
    <property type="entry name" value="Winged helix' DNA-binding domain"/>
    <property type="match status" value="1"/>
</dbReference>
<feature type="chain" id="PRO_1000010454" description="Heat-inducible transcription repressor HrcA">
    <location>
        <begin position="1"/>
        <end position="326"/>
    </location>
</feature>